<reference key="1">
    <citation type="journal article" date="2001" name="Nature">
        <title>Genome sequence of enterohaemorrhagic Escherichia coli O157:H7.</title>
        <authorList>
            <person name="Perna N.T."/>
            <person name="Plunkett G. III"/>
            <person name="Burland V."/>
            <person name="Mau B."/>
            <person name="Glasner J.D."/>
            <person name="Rose D.J."/>
            <person name="Mayhew G.F."/>
            <person name="Evans P.S."/>
            <person name="Gregor J."/>
            <person name="Kirkpatrick H.A."/>
            <person name="Posfai G."/>
            <person name="Hackett J."/>
            <person name="Klink S."/>
            <person name="Boutin A."/>
            <person name="Shao Y."/>
            <person name="Miller L."/>
            <person name="Grotbeck E.J."/>
            <person name="Davis N.W."/>
            <person name="Lim A."/>
            <person name="Dimalanta E.T."/>
            <person name="Potamousis K."/>
            <person name="Apodaca J."/>
            <person name="Anantharaman T.S."/>
            <person name="Lin J."/>
            <person name="Yen G."/>
            <person name="Schwartz D.C."/>
            <person name="Welch R.A."/>
            <person name="Blattner F.R."/>
        </authorList>
    </citation>
    <scope>NUCLEOTIDE SEQUENCE [LARGE SCALE GENOMIC DNA]</scope>
    <source>
        <strain>O157:H7 / EDL933 / ATCC 700927 / EHEC</strain>
    </source>
</reference>
<reference key="2">
    <citation type="journal article" date="2001" name="DNA Res.">
        <title>Complete genome sequence of enterohemorrhagic Escherichia coli O157:H7 and genomic comparison with a laboratory strain K-12.</title>
        <authorList>
            <person name="Hayashi T."/>
            <person name="Makino K."/>
            <person name="Ohnishi M."/>
            <person name="Kurokawa K."/>
            <person name="Ishii K."/>
            <person name="Yokoyama K."/>
            <person name="Han C.-G."/>
            <person name="Ohtsubo E."/>
            <person name="Nakayama K."/>
            <person name="Murata T."/>
            <person name="Tanaka M."/>
            <person name="Tobe T."/>
            <person name="Iida T."/>
            <person name="Takami H."/>
            <person name="Honda T."/>
            <person name="Sasakawa C."/>
            <person name="Ogasawara N."/>
            <person name="Yasunaga T."/>
            <person name="Kuhara S."/>
            <person name="Shiba T."/>
            <person name="Hattori M."/>
            <person name="Shinagawa H."/>
        </authorList>
    </citation>
    <scope>NUCLEOTIDE SEQUENCE [LARGE SCALE GENOMIC DNA]</scope>
    <source>
        <strain>O157:H7 / Sakai / RIMD 0509952 / EHEC</strain>
    </source>
</reference>
<comment type="function">
    <text evidence="1">The phage shock protein (psp) operon (pspABCDE) may play a significant role in the competition for survival under nutrient- or energy-limited conditions. PspA negatively regulates expression of the pspABCDE promoter and of pspG through negative regulation of the psp-specific transcriptional activator PspF. Is also required for membrane integrity, efficient translocation and maintenance of the proton motive force (By similarity).</text>
</comment>
<comment type="subcellular location">
    <subcellularLocation>
        <location evidence="1">Cytoplasm</location>
    </subcellularLocation>
    <subcellularLocation>
        <location evidence="1">Cell inner membrane</location>
        <topology evidence="1">Peripheral membrane protein</topology>
        <orientation evidence="1">Cytoplasmic side</orientation>
    </subcellularLocation>
</comment>
<comment type="similarity">
    <text evidence="3">Belongs to the PspA/Vipp/IM30 family.</text>
</comment>
<gene>
    <name type="primary">pspA</name>
    <name type="ordered locus">Z2482</name>
    <name type="ordered locus">ECs1881</name>
</gene>
<keyword id="KW-0997">Cell inner membrane</keyword>
<keyword id="KW-1003">Cell membrane</keyword>
<keyword id="KW-0175">Coiled coil</keyword>
<keyword id="KW-0963">Cytoplasm</keyword>
<keyword id="KW-0472">Membrane</keyword>
<keyword id="KW-1185">Reference proteome</keyword>
<protein>
    <recommendedName>
        <fullName>Phage shock protein A</fullName>
    </recommendedName>
</protein>
<proteinExistence type="inferred from homology"/>
<sequence>MGIFSRFADIVNANINALLEKAEDPQKLVRLMIQEMEDTLVEVRSTSARALAEKKQLTRRIEQASAREVEWQEKAELALLKEREDLARAALIEKQKLTDLIKSLEHEVTLVDDTLARMKKEIGELENKLSETRARQQALMLRHQAANSSRDVRRQLDSGKLDEAMARFESFERRIDQMEAEAESHSFGKQKSLDDQFAELKADDAISEQLAQLKAKMKQDNQ</sequence>
<feature type="initiator methionine" description="Removed" evidence="1">
    <location>
        <position position="1"/>
    </location>
</feature>
<feature type="chain" id="PRO_0000166293" description="Phage shock protein A">
    <location>
        <begin position="2"/>
        <end position="222"/>
    </location>
</feature>
<feature type="coiled-coil region" evidence="2">
    <location>
        <begin position="30"/>
        <end position="187"/>
    </location>
</feature>
<feature type="coiled-coil region" evidence="2">
    <location>
        <begin position="204"/>
        <end position="222"/>
    </location>
</feature>
<dbReference type="EMBL" id="AE005174">
    <property type="protein sequence ID" value="AAG56500.1"/>
    <property type="molecule type" value="Genomic_DNA"/>
</dbReference>
<dbReference type="EMBL" id="BA000007">
    <property type="protein sequence ID" value="BAB35304.1"/>
    <property type="molecule type" value="Genomic_DNA"/>
</dbReference>
<dbReference type="PIR" id="A99864">
    <property type="entry name" value="A99864"/>
</dbReference>
<dbReference type="PIR" id="H85754">
    <property type="entry name" value="H85754"/>
</dbReference>
<dbReference type="RefSeq" id="NP_309908.1">
    <property type="nucleotide sequence ID" value="NC_002695.1"/>
</dbReference>
<dbReference type="RefSeq" id="WP_000511025.1">
    <property type="nucleotide sequence ID" value="NZ_VOAI01000015.1"/>
</dbReference>
<dbReference type="SMR" id="P0AFM7"/>
<dbReference type="STRING" id="155864.Z2482"/>
<dbReference type="GeneID" id="912684"/>
<dbReference type="GeneID" id="93775430"/>
<dbReference type="KEGG" id="ece:Z2482"/>
<dbReference type="KEGG" id="ecs:ECs_1881"/>
<dbReference type="PATRIC" id="fig|386585.9.peg.1985"/>
<dbReference type="eggNOG" id="COG1842">
    <property type="taxonomic scope" value="Bacteria"/>
</dbReference>
<dbReference type="HOGENOM" id="CLU_056466_3_0_6"/>
<dbReference type="OMA" id="MIFRAKA"/>
<dbReference type="Proteomes" id="UP000000558">
    <property type="component" value="Chromosome"/>
</dbReference>
<dbReference type="Proteomes" id="UP000002519">
    <property type="component" value="Chromosome"/>
</dbReference>
<dbReference type="GO" id="GO:0005829">
    <property type="term" value="C:cytosol"/>
    <property type="evidence" value="ECO:0007669"/>
    <property type="project" value="TreeGrafter"/>
</dbReference>
<dbReference type="GO" id="GO:0005886">
    <property type="term" value="C:plasma membrane"/>
    <property type="evidence" value="ECO:0007669"/>
    <property type="project" value="UniProtKB-SubCell"/>
</dbReference>
<dbReference type="GO" id="GO:0009271">
    <property type="term" value="P:phage shock"/>
    <property type="evidence" value="ECO:0007669"/>
    <property type="project" value="TreeGrafter"/>
</dbReference>
<dbReference type="InterPro" id="IPR014319">
    <property type="entry name" value="Phageshock_PspA"/>
</dbReference>
<dbReference type="InterPro" id="IPR007157">
    <property type="entry name" value="PspA_VIPP1"/>
</dbReference>
<dbReference type="NCBIfam" id="TIGR02977">
    <property type="entry name" value="phageshock_pspA"/>
    <property type="match status" value="1"/>
</dbReference>
<dbReference type="NCBIfam" id="NF007974">
    <property type="entry name" value="PRK10698.1"/>
    <property type="match status" value="1"/>
</dbReference>
<dbReference type="PANTHER" id="PTHR31088">
    <property type="entry name" value="MEMBRANE-ASSOCIATED PROTEIN VIPP1, CHLOROPLASTIC"/>
    <property type="match status" value="1"/>
</dbReference>
<dbReference type="PANTHER" id="PTHR31088:SF6">
    <property type="entry name" value="PHAGE SHOCK PROTEIN A"/>
    <property type="match status" value="1"/>
</dbReference>
<dbReference type="Pfam" id="PF04012">
    <property type="entry name" value="PspA_IM30"/>
    <property type="match status" value="1"/>
</dbReference>
<accession>P0AFM7</accession>
<accession>P23853</accession>
<accession>P76040</accession>
<accession>P77363</accession>
<organism>
    <name type="scientific">Escherichia coli O157:H7</name>
    <dbReference type="NCBI Taxonomy" id="83334"/>
    <lineage>
        <taxon>Bacteria</taxon>
        <taxon>Pseudomonadati</taxon>
        <taxon>Pseudomonadota</taxon>
        <taxon>Gammaproteobacteria</taxon>
        <taxon>Enterobacterales</taxon>
        <taxon>Enterobacteriaceae</taxon>
        <taxon>Escherichia</taxon>
    </lineage>
</organism>
<name>PSPA_ECO57</name>
<evidence type="ECO:0000250" key="1"/>
<evidence type="ECO:0000255" key="2"/>
<evidence type="ECO:0000305" key="3"/>